<proteinExistence type="inferred from homology"/>
<keyword id="KW-0687">Ribonucleoprotein</keyword>
<keyword id="KW-0689">Ribosomal protein</keyword>
<keyword id="KW-0694">RNA-binding</keyword>
<keyword id="KW-0699">rRNA-binding</keyword>
<gene>
    <name evidence="1" type="primary">rplW</name>
    <name type="ordered locus">NMC0134</name>
</gene>
<evidence type="ECO:0000255" key="1">
    <source>
        <dbReference type="HAMAP-Rule" id="MF_01369"/>
    </source>
</evidence>
<evidence type="ECO:0000305" key="2"/>
<protein>
    <recommendedName>
        <fullName evidence="1">Large ribosomal subunit protein uL23</fullName>
    </recommendedName>
    <alternativeName>
        <fullName evidence="2">50S ribosomal protein L23</fullName>
    </alternativeName>
</protein>
<accession>A1KRH5</accession>
<sequence>MGMNQQRLTQVILAPIVSEKSNVLAEKRNQMTFKVLANAAKPEIKAAVELLFGVQVASVTTVTTKGKTKRFGRTLGRRSDVKKAYVSLAAGQELDLEAAAAAADKE</sequence>
<feature type="chain" id="PRO_1000068120" description="Large ribosomal subunit protein uL23">
    <location>
        <begin position="1"/>
        <end position="106"/>
    </location>
</feature>
<organism>
    <name type="scientific">Neisseria meningitidis serogroup C / serotype 2a (strain ATCC 700532 / DSM 15464 / FAM18)</name>
    <dbReference type="NCBI Taxonomy" id="272831"/>
    <lineage>
        <taxon>Bacteria</taxon>
        <taxon>Pseudomonadati</taxon>
        <taxon>Pseudomonadota</taxon>
        <taxon>Betaproteobacteria</taxon>
        <taxon>Neisseriales</taxon>
        <taxon>Neisseriaceae</taxon>
        <taxon>Neisseria</taxon>
    </lineage>
</organism>
<reference key="1">
    <citation type="journal article" date="2007" name="PLoS Genet.">
        <title>Meningococcal genetic variation mechanisms viewed through comparative analysis of serogroup C strain FAM18.</title>
        <authorList>
            <person name="Bentley S.D."/>
            <person name="Vernikos G.S."/>
            <person name="Snyder L.A.S."/>
            <person name="Churcher C."/>
            <person name="Arrowsmith C."/>
            <person name="Chillingworth T."/>
            <person name="Cronin A."/>
            <person name="Davis P.H."/>
            <person name="Holroyd N.E."/>
            <person name="Jagels K."/>
            <person name="Maddison M."/>
            <person name="Moule S."/>
            <person name="Rabbinowitsch E."/>
            <person name="Sharp S."/>
            <person name="Unwin L."/>
            <person name="Whitehead S."/>
            <person name="Quail M.A."/>
            <person name="Achtman M."/>
            <person name="Barrell B.G."/>
            <person name="Saunders N.J."/>
            <person name="Parkhill J."/>
        </authorList>
    </citation>
    <scope>NUCLEOTIDE SEQUENCE [LARGE SCALE GENOMIC DNA]</scope>
    <source>
        <strain>ATCC 700532 / DSM 15464 / FAM18</strain>
    </source>
</reference>
<comment type="function">
    <text evidence="1">One of the early assembly proteins it binds 23S rRNA. One of the proteins that surrounds the polypeptide exit tunnel on the outside of the ribosome. Forms the main docking site for trigger factor binding to the ribosome.</text>
</comment>
<comment type="subunit">
    <text evidence="1">Part of the 50S ribosomal subunit. Contacts protein L29, and trigger factor when it is bound to the ribosome.</text>
</comment>
<comment type="similarity">
    <text evidence="1">Belongs to the universal ribosomal protein uL23 family.</text>
</comment>
<dbReference type="EMBL" id="AM421808">
    <property type="protein sequence ID" value="CAM09453.1"/>
    <property type="molecule type" value="Genomic_DNA"/>
</dbReference>
<dbReference type="SMR" id="A1KRH5"/>
<dbReference type="KEGG" id="nmc:NMC0134"/>
<dbReference type="HOGENOM" id="CLU_037562_3_1_4"/>
<dbReference type="Proteomes" id="UP000002286">
    <property type="component" value="Chromosome"/>
</dbReference>
<dbReference type="GO" id="GO:1990904">
    <property type="term" value="C:ribonucleoprotein complex"/>
    <property type="evidence" value="ECO:0007669"/>
    <property type="project" value="UniProtKB-KW"/>
</dbReference>
<dbReference type="GO" id="GO:0005840">
    <property type="term" value="C:ribosome"/>
    <property type="evidence" value="ECO:0007669"/>
    <property type="project" value="UniProtKB-KW"/>
</dbReference>
<dbReference type="GO" id="GO:0019843">
    <property type="term" value="F:rRNA binding"/>
    <property type="evidence" value="ECO:0007669"/>
    <property type="project" value="UniProtKB-UniRule"/>
</dbReference>
<dbReference type="GO" id="GO:0003735">
    <property type="term" value="F:structural constituent of ribosome"/>
    <property type="evidence" value="ECO:0007669"/>
    <property type="project" value="InterPro"/>
</dbReference>
<dbReference type="GO" id="GO:0006412">
    <property type="term" value="P:translation"/>
    <property type="evidence" value="ECO:0007669"/>
    <property type="project" value="UniProtKB-UniRule"/>
</dbReference>
<dbReference type="FunFam" id="3.30.70.330:FF:000001">
    <property type="entry name" value="50S ribosomal protein L23"/>
    <property type="match status" value="1"/>
</dbReference>
<dbReference type="Gene3D" id="3.30.70.330">
    <property type="match status" value="1"/>
</dbReference>
<dbReference type="HAMAP" id="MF_01369_B">
    <property type="entry name" value="Ribosomal_uL23_B"/>
    <property type="match status" value="1"/>
</dbReference>
<dbReference type="InterPro" id="IPR012677">
    <property type="entry name" value="Nucleotide-bd_a/b_plait_sf"/>
</dbReference>
<dbReference type="InterPro" id="IPR013025">
    <property type="entry name" value="Ribosomal_uL23-like"/>
</dbReference>
<dbReference type="InterPro" id="IPR012678">
    <property type="entry name" value="Ribosomal_uL23/eL15/eS24_sf"/>
</dbReference>
<dbReference type="NCBIfam" id="NF004359">
    <property type="entry name" value="PRK05738.1-3"/>
    <property type="match status" value="1"/>
</dbReference>
<dbReference type="NCBIfam" id="NF004363">
    <property type="entry name" value="PRK05738.2-4"/>
    <property type="match status" value="1"/>
</dbReference>
<dbReference type="PANTHER" id="PTHR11620">
    <property type="entry name" value="60S RIBOSOMAL PROTEIN L23A"/>
    <property type="match status" value="1"/>
</dbReference>
<dbReference type="Pfam" id="PF00276">
    <property type="entry name" value="Ribosomal_L23"/>
    <property type="match status" value="1"/>
</dbReference>
<dbReference type="SUPFAM" id="SSF54189">
    <property type="entry name" value="Ribosomal proteins S24e, L23 and L15e"/>
    <property type="match status" value="1"/>
</dbReference>
<name>RL23_NEIMF</name>